<organism>
    <name type="scientific">Yersinia pestis</name>
    <dbReference type="NCBI Taxonomy" id="632"/>
    <lineage>
        <taxon>Bacteria</taxon>
        <taxon>Pseudomonadati</taxon>
        <taxon>Pseudomonadota</taxon>
        <taxon>Gammaproteobacteria</taxon>
        <taxon>Enterobacterales</taxon>
        <taxon>Yersiniaceae</taxon>
        <taxon>Yersinia</taxon>
    </lineage>
</organism>
<accession>Q8ZAS8</accession>
<accession>Q0WAU5</accession>
<accession>Q74RG2</accession>
<accession>Q7CLD6</accession>
<sequence length="369" mass="40839">MANVTLSSVYKAFGEAVISRDINLEIDDGEFVVFVGPSGCGKSTLLRMIAGLEDITSGELLIGGKRMNEVPPSERGIGMVFQSYALYPHLSVAENMSFGLKLAGVKKAEIYQRVNQVAEVLQLAHLLDRRPKALSGGQRQRVAIGRTLVSEPDVFLLDEPLSNLDAALRVQMRIEISRLHKRLERTMIYVTHDQVEAMTLADKIVVLDAGNIAQVGKPLELYHYPANRFVAGFIGSPKMNFLPVKVTAAEPRQVQIELPNHQRVWLPVEGDQVQVGANMSLGIRPEHLLPSSASEVTLEGEIQVVEQLGNETQIHIQIPAIRQNLVYRQNDVVLVEEGATFSIGLPPHRCHLFREDGTACKRLYQELGV</sequence>
<reference key="1">
    <citation type="journal article" date="2001" name="Nature">
        <title>Genome sequence of Yersinia pestis, the causative agent of plague.</title>
        <authorList>
            <person name="Parkhill J."/>
            <person name="Wren B.W."/>
            <person name="Thomson N.R."/>
            <person name="Titball R.W."/>
            <person name="Holden M.T.G."/>
            <person name="Prentice M.B."/>
            <person name="Sebaihia M."/>
            <person name="James K.D."/>
            <person name="Churcher C.M."/>
            <person name="Mungall K.L."/>
            <person name="Baker S."/>
            <person name="Basham D."/>
            <person name="Bentley S.D."/>
            <person name="Brooks K."/>
            <person name="Cerdeno-Tarraga A.-M."/>
            <person name="Chillingworth T."/>
            <person name="Cronin A."/>
            <person name="Davies R.M."/>
            <person name="Davis P."/>
            <person name="Dougan G."/>
            <person name="Feltwell T."/>
            <person name="Hamlin N."/>
            <person name="Holroyd S."/>
            <person name="Jagels K."/>
            <person name="Karlyshev A.V."/>
            <person name="Leather S."/>
            <person name="Moule S."/>
            <person name="Oyston P.C.F."/>
            <person name="Quail M.A."/>
            <person name="Rutherford K.M."/>
            <person name="Simmonds M."/>
            <person name="Skelton J."/>
            <person name="Stevens K."/>
            <person name="Whitehead S."/>
            <person name="Barrell B.G."/>
        </authorList>
    </citation>
    <scope>NUCLEOTIDE SEQUENCE [LARGE SCALE GENOMIC DNA]</scope>
    <source>
        <strain>CO-92 / Biovar Orientalis</strain>
    </source>
</reference>
<reference key="2">
    <citation type="journal article" date="2002" name="J. Bacteriol.">
        <title>Genome sequence of Yersinia pestis KIM.</title>
        <authorList>
            <person name="Deng W."/>
            <person name="Burland V."/>
            <person name="Plunkett G. III"/>
            <person name="Boutin A."/>
            <person name="Mayhew G.F."/>
            <person name="Liss P."/>
            <person name="Perna N.T."/>
            <person name="Rose D.J."/>
            <person name="Mau B."/>
            <person name="Zhou S."/>
            <person name="Schwartz D.C."/>
            <person name="Fetherston J.D."/>
            <person name="Lindler L.E."/>
            <person name="Brubaker R.R."/>
            <person name="Plano G.V."/>
            <person name="Straley S.C."/>
            <person name="McDonough K.A."/>
            <person name="Nilles M.L."/>
            <person name="Matson J.S."/>
            <person name="Blattner F.R."/>
            <person name="Perry R.D."/>
        </authorList>
    </citation>
    <scope>NUCLEOTIDE SEQUENCE [LARGE SCALE GENOMIC DNA]</scope>
    <source>
        <strain>KIM10+ / Biovar Mediaevalis</strain>
    </source>
</reference>
<reference key="3">
    <citation type="journal article" date="2004" name="DNA Res.">
        <title>Complete genome sequence of Yersinia pestis strain 91001, an isolate avirulent to humans.</title>
        <authorList>
            <person name="Song Y."/>
            <person name="Tong Z."/>
            <person name="Wang J."/>
            <person name="Wang L."/>
            <person name="Guo Z."/>
            <person name="Han Y."/>
            <person name="Zhang J."/>
            <person name="Pei D."/>
            <person name="Zhou D."/>
            <person name="Qin H."/>
            <person name="Pang X."/>
            <person name="Han Y."/>
            <person name="Zhai J."/>
            <person name="Li M."/>
            <person name="Cui B."/>
            <person name="Qi Z."/>
            <person name="Jin L."/>
            <person name="Dai R."/>
            <person name="Chen F."/>
            <person name="Li S."/>
            <person name="Ye C."/>
            <person name="Du Z."/>
            <person name="Lin W."/>
            <person name="Wang J."/>
            <person name="Yu J."/>
            <person name="Yang H."/>
            <person name="Wang J."/>
            <person name="Huang P."/>
            <person name="Yang R."/>
        </authorList>
    </citation>
    <scope>NUCLEOTIDE SEQUENCE [LARGE SCALE GENOMIC DNA]</scope>
    <source>
        <strain>91001 / Biovar Mediaevalis</strain>
    </source>
</reference>
<dbReference type="EC" id="7.5.2.1" evidence="1"/>
<dbReference type="EMBL" id="AL590842">
    <property type="protein sequence ID" value="CAL22299.1"/>
    <property type="molecule type" value="Genomic_DNA"/>
</dbReference>
<dbReference type="EMBL" id="AE009952">
    <property type="protein sequence ID" value="AAM83626.1"/>
    <property type="molecule type" value="Genomic_DNA"/>
</dbReference>
<dbReference type="EMBL" id="AE017042">
    <property type="protein sequence ID" value="AAS63245.1"/>
    <property type="molecule type" value="Genomic_DNA"/>
</dbReference>
<dbReference type="PIR" id="AH0451">
    <property type="entry name" value="AH0451"/>
</dbReference>
<dbReference type="RefSeq" id="WP_002212091.1">
    <property type="nucleotide sequence ID" value="NZ_WUCM01000050.1"/>
</dbReference>
<dbReference type="RefSeq" id="YP_002348593.1">
    <property type="nucleotide sequence ID" value="NC_003143.1"/>
</dbReference>
<dbReference type="SMR" id="Q8ZAS8"/>
<dbReference type="IntAct" id="Q8ZAS8">
    <property type="interactions" value="1"/>
</dbReference>
<dbReference type="STRING" id="214092.YPO3712"/>
<dbReference type="PaxDb" id="214092-YPO3712"/>
<dbReference type="DNASU" id="1144978"/>
<dbReference type="EnsemblBacteria" id="AAS63245">
    <property type="protein sequence ID" value="AAS63245"/>
    <property type="gene ID" value="YP_3074"/>
</dbReference>
<dbReference type="GeneID" id="96663134"/>
<dbReference type="KEGG" id="ype:YPO3712"/>
<dbReference type="KEGG" id="ypk:y0031"/>
<dbReference type="KEGG" id="ypm:YP_3074"/>
<dbReference type="PATRIC" id="fig|214092.21.peg.4222"/>
<dbReference type="eggNOG" id="COG3842">
    <property type="taxonomic scope" value="Bacteria"/>
</dbReference>
<dbReference type="HOGENOM" id="CLU_000604_1_1_6"/>
<dbReference type="OMA" id="RCHLFKE"/>
<dbReference type="OrthoDB" id="9802264at2"/>
<dbReference type="Proteomes" id="UP000000815">
    <property type="component" value="Chromosome"/>
</dbReference>
<dbReference type="Proteomes" id="UP000001019">
    <property type="component" value="Chromosome"/>
</dbReference>
<dbReference type="Proteomes" id="UP000002490">
    <property type="component" value="Chromosome"/>
</dbReference>
<dbReference type="GO" id="GO:0055052">
    <property type="term" value="C:ATP-binding cassette (ABC) transporter complex, substrate-binding subunit-containing"/>
    <property type="evidence" value="ECO:0000318"/>
    <property type="project" value="GO_Central"/>
</dbReference>
<dbReference type="GO" id="GO:1990060">
    <property type="term" value="C:maltose transport complex"/>
    <property type="evidence" value="ECO:0000318"/>
    <property type="project" value="GO_Central"/>
</dbReference>
<dbReference type="GO" id="GO:0015423">
    <property type="term" value="F:ABC-type maltose transporter activity"/>
    <property type="evidence" value="ECO:0000318"/>
    <property type="project" value="GO_Central"/>
</dbReference>
<dbReference type="GO" id="GO:0005524">
    <property type="term" value="F:ATP binding"/>
    <property type="evidence" value="ECO:0007669"/>
    <property type="project" value="UniProtKB-KW"/>
</dbReference>
<dbReference type="GO" id="GO:0016887">
    <property type="term" value="F:ATP hydrolysis activity"/>
    <property type="evidence" value="ECO:0007669"/>
    <property type="project" value="InterPro"/>
</dbReference>
<dbReference type="CDD" id="cd03301">
    <property type="entry name" value="ABC_MalK_N"/>
    <property type="match status" value="1"/>
</dbReference>
<dbReference type="FunFam" id="3.40.50.300:FF:000042">
    <property type="entry name" value="Maltose/maltodextrin ABC transporter, ATP-binding protein"/>
    <property type="match status" value="1"/>
</dbReference>
<dbReference type="FunFam" id="2.40.50.100:FF:000014">
    <property type="entry name" value="Maltose/maltodextrin import ATP-binding protein MalK"/>
    <property type="match status" value="1"/>
</dbReference>
<dbReference type="Gene3D" id="2.40.50.100">
    <property type="match status" value="1"/>
</dbReference>
<dbReference type="Gene3D" id="2.40.50.140">
    <property type="entry name" value="Nucleic acid-binding proteins"/>
    <property type="match status" value="1"/>
</dbReference>
<dbReference type="Gene3D" id="3.40.50.300">
    <property type="entry name" value="P-loop containing nucleotide triphosphate hydrolases"/>
    <property type="match status" value="1"/>
</dbReference>
<dbReference type="InterPro" id="IPR003593">
    <property type="entry name" value="AAA+_ATPase"/>
</dbReference>
<dbReference type="InterPro" id="IPR003439">
    <property type="entry name" value="ABC_transporter-like_ATP-bd"/>
</dbReference>
<dbReference type="InterPro" id="IPR017871">
    <property type="entry name" value="ABC_transporter-like_CS"/>
</dbReference>
<dbReference type="InterPro" id="IPR015855">
    <property type="entry name" value="ABC_transpr_MalK-like"/>
</dbReference>
<dbReference type="InterPro" id="IPR047641">
    <property type="entry name" value="ABC_transpr_MalK/UgpC-like"/>
</dbReference>
<dbReference type="InterPro" id="IPR008995">
    <property type="entry name" value="Mo/tungstate-bd_C_term_dom"/>
</dbReference>
<dbReference type="InterPro" id="IPR012340">
    <property type="entry name" value="NA-bd_OB-fold"/>
</dbReference>
<dbReference type="InterPro" id="IPR040582">
    <property type="entry name" value="OB_MalK-like"/>
</dbReference>
<dbReference type="InterPro" id="IPR027417">
    <property type="entry name" value="P-loop_NTPase"/>
</dbReference>
<dbReference type="NCBIfam" id="NF008233">
    <property type="entry name" value="PRK11000.1"/>
    <property type="match status" value="1"/>
</dbReference>
<dbReference type="NCBIfam" id="NF008653">
    <property type="entry name" value="PRK11650.1"/>
    <property type="match status" value="1"/>
</dbReference>
<dbReference type="PANTHER" id="PTHR43875">
    <property type="entry name" value="MALTODEXTRIN IMPORT ATP-BINDING PROTEIN MSMX"/>
    <property type="match status" value="1"/>
</dbReference>
<dbReference type="PANTHER" id="PTHR43875:SF3">
    <property type="entry name" value="MALTOSE_MALTODEXTRIN IMPORT ATP-BINDING PROTEIN MALK"/>
    <property type="match status" value="1"/>
</dbReference>
<dbReference type="Pfam" id="PF00005">
    <property type="entry name" value="ABC_tran"/>
    <property type="match status" value="1"/>
</dbReference>
<dbReference type="Pfam" id="PF17912">
    <property type="entry name" value="OB_MalK"/>
    <property type="match status" value="1"/>
</dbReference>
<dbReference type="SMART" id="SM00382">
    <property type="entry name" value="AAA"/>
    <property type="match status" value="1"/>
</dbReference>
<dbReference type="SUPFAM" id="SSF50331">
    <property type="entry name" value="MOP-like"/>
    <property type="match status" value="1"/>
</dbReference>
<dbReference type="SUPFAM" id="SSF52540">
    <property type="entry name" value="P-loop containing nucleoside triphosphate hydrolases"/>
    <property type="match status" value="1"/>
</dbReference>
<dbReference type="PROSITE" id="PS00211">
    <property type="entry name" value="ABC_TRANSPORTER_1"/>
    <property type="match status" value="1"/>
</dbReference>
<dbReference type="PROSITE" id="PS50893">
    <property type="entry name" value="ABC_TRANSPORTER_2"/>
    <property type="match status" value="1"/>
</dbReference>
<dbReference type="PROSITE" id="PS51245">
    <property type="entry name" value="MALK"/>
    <property type="match status" value="1"/>
</dbReference>
<keyword id="KW-0067">ATP-binding</keyword>
<keyword id="KW-0997">Cell inner membrane</keyword>
<keyword id="KW-1003">Cell membrane</keyword>
<keyword id="KW-0472">Membrane</keyword>
<keyword id="KW-0547">Nucleotide-binding</keyword>
<keyword id="KW-1185">Reference proteome</keyword>
<keyword id="KW-0762">Sugar transport</keyword>
<keyword id="KW-1278">Translocase</keyword>
<keyword id="KW-0813">Transport</keyword>
<name>MALK_YERPE</name>
<protein>
    <recommendedName>
        <fullName evidence="1">Maltose/maltodextrin import ATP-binding protein MalK</fullName>
        <ecNumber evidence="1">7.5.2.1</ecNumber>
    </recommendedName>
</protein>
<comment type="function">
    <text evidence="1">Part of the ABC transporter complex MalEFGK involved in maltose/maltodextrin import. Responsible for energy coupling to the transport system.</text>
</comment>
<comment type="catalytic activity">
    <reaction evidence="1">
        <text>D-maltose(out) + ATP + H2O = D-maltose(in) + ADP + phosphate + H(+)</text>
        <dbReference type="Rhea" id="RHEA:22132"/>
        <dbReference type="ChEBI" id="CHEBI:15377"/>
        <dbReference type="ChEBI" id="CHEBI:15378"/>
        <dbReference type="ChEBI" id="CHEBI:17306"/>
        <dbReference type="ChEBI" id="CHEBI:30616"/>
        <dbReference type="ChEBI" id="CHEBI:43474"/>
        <dbReference type="ChEBI" id="CHEBI:456216"/>
        <dbReference type="EC" id="7.5.2.1"/>
    </reaction>
</comment>
<comment type="subunit">
    <text evidence="1">The complex is composed of two ATP-binding proteins (MalK), two transmembrane proteins (MalG and MalK) and a solute-binding protein (MalE).</text>
</comment>
<comment type="subcellular location">
    <subcellularLocation>
        <location evidence="1">Cell inner membrane</location>
        <topology evidence="1">Peripheral membrane protein</topology>
    </subcellularLocation>
</comment>
<comment type="similarity">
    <text evidence="1">Belongs to the ABC transporter superfamily. Maltooligosaccharide importer (TC 3.A.1.1.1) family.</text>
</comment>
<feature type="chain" id="PRO_0000092488" description="Maltose/maltodextrin import ATP-binding protein MalK">
    <location>
        <begin position="1"/>
        <end position="369"/>
    </location>
</feature>
<feature type="domain" description="ABC transporter" evidence="1">
    <location>
        <begin position="4"/>
        <end position="234"/>
    </location>
</feature>
<feature type="binding site" evidence="1">
    <location>
        <begin position="36"/>
        <end position="43"/>
    </location>
    <ligand>
        <name>ATP</name>
        <dbReference type="ChEBI" id="CHEBI:30616"/>
    </ligand>
</feature>
<proteinExistence type="inferred from homology"/>
<evidence type="ECO:0000255" key="1">
    <source>
        <dbReference type="HAMAP-Rule" id="MF_01709"/>
    </source>
</evidence>
<gene>
    <name evidence="1" type="primary">malK</name>
    <name type="ordered locus">YPO3712</name>
    <name type="ordered locus">y0031</name>
    <name type="ordered locus">YP_3074</name>
</gene>